<evidence type="ECO:0000250" key="1">
    <source>
        <dbReference type="UniProtKB" id="D4A208"/>
    </source>
</evidence>
<evidence type="ECO:0000250" key="2">
    <source>
        <dbReference type="UniProtKB" id="O75044"/>
    </source>
</evidence>
<evidence type="ECO:0000255" key="3"/>
<evidence type="ECO:0000255" key="4">
    <source>
        <dbReference type="PROSITE-ProRule" id="PRU00172"/>
    </source>
</evidence>
<evidence type="ECO:0000255" key="5">
    <source>
        <dbReference type="PROSITE-ProRule" id="PRU00192"/>
    </source>
</evidence>
<evidence type="ECO:0000255" key="6">
    <source>
        <dbReference type="PROSITE-ProRule" id="PRU01077"/>
    </source>
</evidence>
<evidence type="ECO:0000256" key="7">
    <source>
        <dbReference type="SAM" id="MobiDB-lite"/>
    </source>
</evidence>
<evidence type="ECO:0000269" key="8">
    <source>
    </source>
</evidence>
<evidence type="ECO:0000269" key="9">
    <source>
    </source>
</evidence>
<evidence type="ECO:0000269" key="10">
    <source>
    </source>
</evidence>
<evidence type="ECO:0000269" key="11">
    <source>
    </source>
</evidence>
<evidence type="ECO:0000269" key="12">
    <source>
    </source>
</evidence>
<evidence type="ECO:0000269" key="13">
    <source>
    </source>
</evidence>
<evidence type="ECO:0000303" key="14">
    <source>
    </source>
</evidence>
<evidence type="ECO:0000303" key="15">
    <source>
    </source>
</evidence>
<evidence type="ECO:0000305" key="16"/>
<evidence type="ECO:0000312" key="17">
    <source>
        <dbReference type="MGI" id="MGI:109605"/>
    </source>
</evidence>
<evidence type="ECO:0007744" key="18">
    <source>
    </source>
</evidence>
<organism>
    <name type="scientific">Mus musculus</name>
    <name type="common">Mouse</name>
    <dbReference type="NCBI Taxonomy" id="10090"/>
    <lineage>
        <taxon>Eukaryota</taxon>
        <taxon>Metazoa</taxon>
        <taxon>Chordata</taxon>
        <taxon>Craniata</taxon>
        <taxon>Vertebrata</taxon>
        <taxon>Euteleostomi</taxon>
        <taxon>Mammalia</taxon>
        <taxon>Eutheria</taxon>
        <taxon>Euarchontoglires</taxon>
        <taxon>Glires</taxon>
        <taxon>Rodentia</taxon>
        <taxon>Myomorpha</taxon>
        <taxon>Muroidea</taxon>
        <taxon>Muridae</taxon>
        <taxon>Murinae</taxon>
        <taxon>Mus</taxon>
        <taxon>Mus</taxon>
    </lineage>
</organism>
<dbReference type="EMBL" id="AC109299">
    <property type="status" value="NOT_ANNOTATED_CDS"/>
    <property type="molecule type" value="Genomic_DNA"/>
</dbReference>
<dbReference type="EMBL" id="AC120217">
    <property type="status" value="NOT_ANNOTATED_CDS"/>
    <property type="molecule type" value="Genomic_DNA"/>
</dbReference>
<dbReference type="EMBL" id="AC165436">
    <property type="status" value="NOT_ANNOTATED_CDS"/>
    <property type="molecule type" value="Genomic_DNA"/>
</dbReference>
<dbReference type="EMBL" id="BC151081">
    <property type="protein sequence ID" value="AAI51082.1"/>
    <property type="molecule type" value="mRNA"/>
</dbReference>
<dbReference type="EMBL" id="BC151082">
    <property type="protein sequence ID" value="AAI51083.1"/>
    <property type="molecule type" value="mRNA"/>
</dbReference>
<dbReference type="EMBL" id="BC158055">
    <property type="protein sequence ID" value="AAI58056.1"/>
    <property type="molecule type" value="mRNA"/>
</dbReference>
<dbReference type="EMBL" id="BC172152">
    <property type="protein sequence ID" value="AAI72152.1"/>
    <property type="molecule type" value="mRNA"/>
</dbReference>
<dbReference type="EMBL" id="AY057900">
    <property type="protein sequence ID" value="AAL27032.1"/>
    <property type="molecule type" value="mRNA"/>
</dbReference>
<dbReference type="EMBL" id="AK132220">
    <property type="protein sequence ID" value="BAE21041.1"/>
    <property type="molecule type" value="mRNA"/>
</dbReference>
<dbReference type="EMBL" id="U40752">
    <property type="protein sequence ID" value="AAC52480.1"/>
    <property type="molecule type" value="mRNA"/>
</dbReference>
<dbReference type="CCDS" id="CCDS48355.1"/>
<dbReference type="PIR" id="S64712">
    <property type="entry name" value="S64712"/>
</dbReference>
<dbReference type="RefSeq" id="NP_001074480.2">
    <property type="nucleotide sequence ID" value="NM_001081011.2"/>
</dbReference>
<dbReference type="RefSeq" id="XP_006529197.1">
    <property type="nucleotide sequence ID" value="XM_006529134.3"/>
</dbReference>
<dbReference type="SMR" id="Q91Z67"/>
<dbReference type="BioGRID" id="199721">
    <property type="interactions" value="49"/>
</dbReference>
<dbReference type="FunCoup" id="Q91Z67">
    <property type="interactions" value="1967"/>
</dbReference>
<dbReference type="IntAct" id="Q91Z67">
    <property type="interactions" value="5"/>
</dbReference>
<dbReference type="MINT" id="Q91Z67"/>
<dbReference type="STRING" id="10090.ENSMUSP00000095195"/>
<dbReference type="GlyGen" id="Q91Z67">
    <property type="glycosylation" value="3 sites, 1 N-linked glycan (1 site), 1 O-linked glycan (1 site)"/>
</dbReference>
<dbReference type="iPTMnet" id="Q91Z67"/>
<dbReference type="PhosphoSitePlus" id="Q91Z67"/>
<dbReference type="SwissPalm" id="Q91Z67"/>
<dbReference type="jPOST" id="Q91Z67"/>
<dbReference type="PaxDb" id="10090-ENSMUSP00000095195"/>
<dbReference type="PeptideAtlas" id="Q91Z67"/>
<dbReference type="ProteomicsDB" id="263343"/>
<dbReference type="Pumba" id="Q91Z67"/>
<dbReference type="DNASU" id="14270"/>
<dbReference type="Ensembl" id="ENSMUST00000097588.9">
    <property type="protein sequence ID" value="ENSMUSP00000095195.3"/>
    <property type="gene ID" value="ENSMUSG00000026425.16"/>
</dbReference>
<dbReference type="GeneID" id="14270"/>
<dbReference type="KEGG" id="mmu:14270"/>
<dbReference type="UCSC" id="uc007cng.2">
    <property type="organism name" value="mouse"/>
</dbReference>
<dbReference type="AGR" id="MGI:109605"/>
<dbReference type="CTD" id="23380"/>
<dbReference type="MGI" id="MGI:109605">
    <property type="gene designation" value="Srgap2"/>
</dbReference>
<dbReference type="VEuPathDB" id="HostDB:ENSMUSG00000026425"/>
<dbReference type="eggNOG" id="KOG3565">
    <property type="taxonomic scope" value="Eukaryota"/>
</dbReference>
<dbReference type="GeneTree" id="ENSGT00950000182824"/>
<dbReference type="InParanoid" id="Q91Z67"/>
<dbReference type="OMA" id="SPLNCWN"/>
<dbReference type="OrthoDB" id="5981864at2759"/>
<dbReference type="PhylomeDB" id="Q91Z67"/>
<dbReference type="TreeFam" id="TF315892"/>
<dbReference type="Reactome" id="R-MMU-5663220">
    <property type="pathway name" value="RHO GTPases Activate Formins"/>
</dbReference>
<dbReference type="Reactome" id="R-MMU-9013148">
    <property type="pathway name" value="CDC42 GTPase cycle"/>
</dbReference>
<dbReference type="Reactome" id="R-MMU-9013149">
    <property type="pathway name" value="RAC1 GTPase cycle"/>
</dbReference>
<dbReference type="Reactome" id="R-MMU-9013406">
    <property type="pathway name" value="RHOQ GTPase cycle"/>
</dbReference>
<dbReference type="Reactome" id="R-MMU-9013420">
    <property type="pathway name" value="RHOU GTPase cycle"/>
</dbReference>
<dbReference type="Reactome" id="R-MMU-9013423">
    <property type="pathway name" value="RAC3 GTPase cycle"/>
</dbReference>
<dbReference type="Reactome" id="R-MMU-9035034">
    <property type="pathway name" value="RHOF GTPase cycle"/>
</dbReference>
<dbReference type="BioGRID-ORCS" id="14270">
    <property type="hits" value="5 hits in 79 CRISPR screens"/>
</dbReference>
<dbReference type="ChiTaRS" id="Srgap2">
    <property type="organism name" value="mouse"/>
</dbReference>
<dbReference type="PRO" id="PR:Q91Z67"/>
<dbReference type="Proteomes" id="UP000000589">
    <property type="component" value="Chromosome 1"/>
</dbReference>
<dbReference type="RNAct" id="Q91Z67">
    <property type="molecule type" value="protein"/>
</dbReference>
<dbReference type="Bgee" id="ENSMUSG00000026425">
    <property type="expression patterns" value="Expressed in embryonic brain and 260 other cell types or tissues"/>
</dbReference>
<dbReference type="ExpressionAtlas" id="Q91Z67">
    <property type="expression patterns" value="baseline and differential"/>
</dbReference>
<dbReference type="GO" id="GO:0005829">
    <property type="term" value="C:cytosol"/>
    <property type="evidence" value="ECO:0000314"/>
    <property type="project" value="UniProtKB"/>
</dbReference>
<dbReference type="GO" id="GO:0043197">
    <property type="term" value="C:dendritic spine"/>
    <property type="evidence" value="ECO:0000314"/>
    <property type="project" value="UniProtKB"/>
</dbReference>
<dbReference type="GO" id="GO:0044327">
    <property type="term" value="C:dendritic spine head"/>
    <property type="evidence" value="ECO:0000250"/>
    <property type="project" value="UniProtKB"/>
</dbReference>
<dbReference type="GO" id="GO:0098978">
    <property type="term" value="C:glutamatergic synapse"/>
    <property type="evidence" value="ECO:0000314"/>
    <property type="project" value="SynGO"/>
</dbReference>
<dbReference type="GO" id="GO:0030027">
    <property type="term" value="C:lamellipodium"/>
    <property type="evidence" value="ECO:0007669"/>
    <property type="project" value="UniProtKB-SubCell"/>
</dbReference>
<dbReference type="GO" id="GO:0005743">
    <property type="term" value="C:mitochondrial inner membrane"/>
    <property type="evidence" value="ECO:0007005"/>
    <property type="project" value="MGI"/>
</dbReference>
<dbReference type="GO" id="GO:0005634">
    <property type="term" value="C:nucleus"/>
    <property type="evidence" value="ECO:0007669"/>
    <property type="project" value="UniProtKB-SubCell"/>
</dbReference>
<dbReference type="GO" id="GO:0045335">
    <property type="term" value="C:phagocytic vesicle"/>
    <property type="evidence" value="ECO:0000314"/>
    <property type="project" value="UniProtKB"/>
</dbReference>
<dbReference type="GO" id="GO:0005886">
    <property type="term" value="C:plasma membrane"/>
    <property type="evidence" value="ECO:0000314"/>
    <property type="project" value="UniProtKB"/>
</dbReference>
<dbReference type="GO" id="GO:0014069">
    <property type="term" value="C:postsynaptic density"/>
    <property type="evidence" value="ECO:0000314"/>
    <property type="project" value="UniProtKB"/>
</dbReference>
<dbReference type="GO" id="GO:0045211">
    <property type="term" value="C:postsynaptic membrane"/>
    <property type="evidence" value="ECO:0000314"/>
    <property type="project" value="UniProtKB"/>
</dbReference>
<dbReference type="GO" id="GO:0005096">
    <property type="term" value="F:GTPase activator activity"/>
    <property type="evidence" value="ECO:0000314"/>
    <property type="project" value="UniProtKB"/>
</dbReference>
<dbReference type="GO" id="GO:0042803">
    <property type="term" value="F:protein homodimerization activity"/>
    <property type="evidence" value="ECO:0000314"/>
    <property type="project" value="UniProtKB"/>
</dbReference>
<dbReference type="GO" id="GO:0031267">
    <property type="term" value="F:small GTPase binding"/>
    <property type="evidence" value="ECO:0000314"/>
    <property type="project" value="UniProtKB"/>
</dbReference>
<dbReference type="GO" id="GO:0051014">
    <property type="term" value="P:actin filament severing"/>
    <property type="evidence" value="ECO:0000250"/>
    <property type="project" value="UniProtKB"/>
</dbReference>
<dbReference type="GO" id="GO:0060996">
    <property type="term" value="P:dendritic spine development"/>
    <property type="evidence" value="ECO:0000315"/>
    <property type="project" value="UniProtKB"/>
</dbReference>
<dbReference type="GO" id="GO:1904861">
    <property type="term" value="P:excitatory synapse assembly"/>
    <property type="evidence" value="ECO:0000315"/>
    <property type="project" value="UniProtKB"/>
</dbReference>
<dbReference type="GO" id="GO:0021816">
    <property type="term" value="P:extension of a leading process involved in cell motility in cerebral cortex radial glia guided migration"/>
    <property type="evidence" value="ECO:0000315"/>
    <property type="project" value="UniProtKB"/>
</dbReference>
<dbReference type="GO" id="GO:0046847">
    <property type="term" value="P:filopodium assembly"/>
    <property type="evidence" value="ECO:0000314"/>
    <property type="project" value="UniProtKB"/>
</dbReference>
<dbReference type="GO" id="GO:1904862">
    <property type="term" value="P:inhibitory synapse assembly"/>
    <property type="evidence" value="ECO:0000315"/>
    <property type="project" value="UniProtKB"/>
</dbReference>
<dbReference type="GO" id="GO:0003363">
    <property type="term" value="P:lamellipodium assembly involved in ameboidal cell migration"/>
    <property type="evidence" value="ECO:0007669"/>
    <property type="project" value="Ensembl"/>
</dbReference>
<dbReference type="GO" id="GO:2001223">
    <property type="term" value="P:negative regulation of neuron migration"/>
    <property type="evidence" value="ECO:0000250"/>
    <property type="project" value="UniProtKB"/>
</dbReference>
<dbReference type="GO" id="GO:0048812">
    <property type="term" value="P:neuron projection morphogenesis"/>
    <property type="evidence" value="ECO:0000315"/>
    <property type="project" value="UniProtKB"/>
</dbReference>
<dbReference type="GO" id="GO:0043547">
    <property type="term" value="P:positive regulation of GTPase activity"/>
    <property type="evidence" value="ECO:0000314"/>
    <property type="project" value="UniProtKB"/>
</dbReference>
<dbReference type="GO" id="GO:0030334">
    <property type="term" value="P:regulation of cell migration"/>
    <property type="evidence" value="ECO:0000314"/>
    <property type="project" value="UniProtKB"/>
</dbReference>
<dbReference type="GO" id="GO:0051963">
    <property type="term" value="P:regulation of synapse assembly"/>
    <property type="evidence" value="ECO:0000314"/>
    <property type="project" value="SynGO"/>
</dbReference>
<dbReference type="GO" id="GO:0007165">
    <property type="term" value="P:signal transduction"/>
    <property type="evidence" value="ECO:0007669"/>
    <property type="project" value="InterPro"/>
</dbReference>
<dbReference type="GO" id="GO:0034446">
    <property type="term" value="P:substrate adhesion-dependent cell spreading"/>
    <property type="evidence" value="ECO:0007669"/>
    <property type="project" value="Ensembl"/>
</dbReference>
<dbReference type="CDD" id="cd07682">
    <property type="entry name" value="F-BAR_srGAP2"/>
    <property type="match status" value="1"/>
</dbReference>
<dbReference type="CDD" id="cd04383">
    <property type="entry name" value="RhoGAP_srGAP"/>
    <property type="match status" value="1"/>
</dbReference>
<dbReference type="CDD" id="cd11955">
    <property type="entry name" value="SH3_srGAP1-3"/>
    <property type="match status" value="1"/>
</dbReference>
<dbReference type="FunFam" id="1.10.555.10:FF:000010">
    <property type="entry name" value="SLIT-ROBO Rho GTPase-activating protein 1 isoform 2"/>
    <property type="match status" value="1"/>
</dbReference>
<dbReference type="FunFam" id="1.20.1270.60:FF:000006">
    <property type="entry name" value="SLIT-ROBO Rho GTPase-activating protein 1 isoform 2"/>
    <property type="match status" value="1"/>
</dbReference>
<dbReference type="FunFam" id="2.30.30.40:FF:000266">
    <property type="entry name" value="SLIT-ROBO Rho GTPase-activating protein 2"/>
    <property type="match status" value="1"/>
</dbReference>
<dbReference type="Gene3D" id="1.20.1270.60">
    <property type="entry name" value="Arfaptin homology (AH) domain/BAR domain"/>
    <property type="match status" value="1"/>
</dbReference>
<dbReference type="Gene3D" id="1.10.555.10">
    <property type="entry name" value="Rho GTPase activation protein"/>
    <property type="match status" value="1"/>
</dbReference>
<dbReference type="Gene3D" id="2.30.30.40">
    <property type="entry name" value="SH3 Domains"/>
    <property type="match status" value="1"/>
</dbReference>
<dbReference type="InterPro" id="IPR027267">
    <property type="entry name" value="AH/BAR_dom_sf"/>
</dbReference>
<dbReference type="InterPro" id="IPR031160">
    <property type="entry name" value="F_BAR"/>
</dbReference>
<dbReference type="InterPro" id="IPR001060">
    <property type="entry name" value="FCH_dom"/>
</dbReference>
<dbReference type="InterPro" id="IPR008936">
    <property type="entry name" value="Rho_GTPase_activation_prot"/>
</dbReference>
<dbReference type="InterPro" id="IPR000198">
    <property type="entry name" value="RhoGAP_dom"/>
</dbReference>
<dbReference type="InterPro" id="IPR036028">
    <property type="entry name" value="SH3-like_dom_sf"/>
</dbReference>
<dbReference type="InterPro" id="IPR001452">
    <property type="entry name" value="SH3_domain"/>
</dbReference>
<dbReference type="InterPro" id="IPR051627">
    <property type="entry name" value="SLIT-ROBO_RhoGAP"/>
</dbReference>
<dbReference type="InterPro" id="IPR035648">
    <property type="entry name" value="srGAP1/2/3_SH3"/>
</dbReference>
<dbReference type="PANTHER" id="PTHR14166">
    <property type="entry name" value="SLIT-ROBO RHO GTPASE ACTIVATING PROTEIN"/>
    <property type="match status" value="1"/>
</dbReference>
<dbReference type="Pfam" id="PF00611">
    <property type="entry name" value="FCH"/>
    <property type="match status" value="1"/>
</dbReference>
<dbReference type="Pfam" id="PF00620">
    <property type="entry name" value="RhoGAP"/>
    <property type="match status" value="1"/>
</dbReference>
<dbReference type="Pfam" id="PF00018">
    <property type="entry name" value="SH3_1"/>
    <property type="match status" value="1"/>
</dbReference>
<dbReference type="SMART" id="SM00055">
    <property type="entry name" value="FCH"/>
    <property type="match status" value="1"/>
</dbReference>
<dbReference type="SMART" id="SM00324">
    <property type="entry name" value="RhoGAP"/>
    <property type="match status" value="1"/>
</dbReference>
<dbReference type="SMART" id="SM00326">
    <property type="entry name" value="SH3"/>
    <property type="match status" value="1"/>
</dbReference>
<dbReference type="SUPFAM" id="SSF103657">
    <property type="entry name" value="BAR/IMD domain-like"/>
    <property type="match status" value="1"/>
</dbReference>
<dbReference type="SUPFAM" id="SSF48350">
    <property type="entry name" value="GTPase activation domain, GAP"/>
    <property type="match status" value="1"/>
</dbReference>
<dbReference type="SUPFAM" id="SSF50044">
    <property type="entry name" value="SH3-domain"/>
    <property type="match status" value="1"/>
</dbReference>
<dbReference type="PROSITE" id="PS51741">
    <property type="entry name" value="F_BAR"/>
    <property type="match status" value="1"/>
</dbReference>
<dbReference type="PROSITE" id="PS50238">
    <property type="entry name" value="RHOGAP"/>
    <property type="match status" value="1"/>
</dbReference>
<dbReference type="PROSITE" id="PS50002">
    <property type="entry name" value="SH3"/>
    <property type="match status" value="1"/>
</dbReference>
<protein>
    <recommendedName>
        <fullName evidence="14">SLIT-ROBO Rho GTPase-activating protein 2</fullName>
        <shortName evidence="14">srGAP2</shortName>
    </recommendedName>
    <alternativeName>
        <fullName>Formin-binding protein 2</fullName>
    </alternativeName>
    <alternativeName>
        <fullName evidence="15">Formin-binding protein 27</fullName>
        <shortName evidence="15">FBP-27</shortName>
    </alternativeName>
</protein>
<name>SRGP2_MOUSE</name>
<accession>Q91Z67</accession>
<accession>B2RY13</accession>
<accession>Q3V1V8</accession>
<accession>Q61054</accession>
<comment type="function">
    <text evidence="8 11 12 13">Postsynaptic RAC1 GTPase activating protein (GAP) that plays a key role in neuronal morphogenesis and migration mainly during development of the cerebral cortex (PubMed:19737524, PubMed:22559944, PubMed:27373832). Regulates excitatory and inhibitory synapse maturation and density in cortical pyramidal neurons (PubMed:19737524, PubMed:22559944, PubMed:27373832). SRGAP2/SRGAP2A limits excitatory and inhibitory synapse density through its RAC1-specific GTPase activating activity, while it promotes maturation of both excitatory and inhibitory synapses through its ability to bind to the postsynaptic scaffolding protein HOMER1 at excitatory synapses, and the postsynaptic protein GPHN at inhibitory synapses (PubMed:27373832). Mechanistically, acts by binding and deforming membranes, thereby regulating actin dynamics to regulate cell migration and differentiation (PubMed:19737524, PubMed:22559944, PubMed:26439400). Promotes cell repulsion and contact inhibition of locomotion: localizes to protrusions with curved edges and controls the duration of RAC1 activity in contact protrusions (PubMed:26439400). In non-neuronal cells, may also play a role in cell migration by regulating the formation of lamellipodia and filopodia (PubMed:22559944).</text>
</comment>
<comment type="subunit">
    <text evidence="2 8 9 10 13">Homodimer (PubMed:19737524). Forms a heterooligomer with SRGAP1 and SRGAP3 through its F-BAR domain (By similarity). Interacts (via SH3 domain) with GPHN (PubMed:22126966, PubMed:27373832). Interacts (via SH3 domain) with FMNL1 (activated by RAC1); regulates the actin filament severing activity of FMNL1 and actin dynamics (PubMed:21148482). Interacts (via SH3 domain) with FMNL3 (PubMed:21148482). Interacts with RAC1; specifically stimulates RAC1 GTPase activity (PubMed:19737524). Interacts (via F-BAR domain) with HOMER1 (PubMed:27373832). Interacts with ROBO1 and ROBO2 (PubMed:21148482). Interacts with FASLG (By similarity). Interacts with PRMT5 (By similarity).</text>
</comment>
<comment type="subcellular location">
    <subcellularLocation>
        <location evidence="8">Cell membrane</location>
    </subcellularLocation>
    <subcellularLocation>
        <location evidence="13">Cell projection</location>
        <location evidence="13">Dendritic spine</location>
    </subcellularLocation>
    <subcellularLocation>
        <location evidence="11">Postsynaptic density</location>
    </subcellularLocation>
    <subcellularLocation>
        <location evidence="11">Postsynaptic cell membrane</location>
    </subcellularLocation>
    <subcellularLocation>
        <location evidence="2">Cell projection</location>
        <location evidence="2">Lamellipodium</location>
    </subcellularLocation>
    <subcellularLocation>
        <location evidence="9">Cytoplasmic vesicle</location>
        <location evidence="9">Phagosome</location>
    </subcellularLocation>
    <subcellularLocation>
        <location evidence="1">Nucleus</location>
    </subcellularLocation>
    <subcellularLocation>
        <location evidence="9">Cytoplasm</location>
        <location evidence="9">Cytosol</location>
    </subcellularLocation>
    <text evidence="1 9">Recruited to actin-rich phagosomes during phagocytosis (PubMed:21148482). Translocates from nucleus to cytoplasm during development (By similarity).</text>
</comment>
<comment type="developmental stage">
    <text evidence="8">Expressed throughout cortical development culminating at P1. Expression is reduced but still present in the adult cortex. Expressed in the cortical wall both in neuronal progenitors in the ventricular zone and post-mitotic neurons in the cortical plate (at protein level).</text>
</comment>
<comment type="domain">
    <text evidence="2">The F-BAR domain mediates oligomerization, binds membranes, and induces plasma membrane protrusions.</text>
</comment>
<comment type="PTM">
    <text evidence="2">Methylation at Arg-927 is required for the stimulation of cell migration, dimerization and localization at the plasma membrane protrusions.</text>
</comment>
<comment type="disruption phenotype">
    <text evidence="11">Mice are viable and show no abnormality of cortical lamination. However, a delay in dendritic spine maturation coupled to an increase in spine neck and spine density is observed.</text>
</comment>
<comment type="online information" name="Protein Spotlight">
    <link uri="https://www.proteinspotlight.org/back_issues/143"/>
    <text>Branching out - Issue 143 of October 2012</text>
</comment>
<proteinExistence type="evidence at protein level"/>
<reference key="1">
    <citation type="journal article" date="2009" name="PLoS Biol.">
        <title>Lineage-specific biology revealed by a finished genome assembly of the mouse.</title>
        <authorList>
            <person name="Church D.M."/>
            <person name="Goodstadt L."/>
            <person name="Hillier L.W."/>
            <person name="Zody M.C."/>
            <person name="Goldstein S."/>
            <person name="She X."/>
            <person name="Bult C.J."/>
            <person name="Agarwala R."/>
            <person name="Cherry J.L."/>
            <person name="DiCuccio M."/>
            <person name="Hlavina W."/>
            <person name="Kapustin Y."/>
            <person name="Meric P."/>
            <person name="Maglott D."/>
            <person name="Birtle Z."/>
            <person name="Marques A.C."/>
            <person name="Graves T."/>
            <person name="Zhou S."/>
            <person name="Teague B."/>
            <person name="Potamousis K."/>
            <person name="Churas C."/>
            <person name="Place M."/>
            <person name="Herschleb J."/>
            <person name="Runnheim R."/>
            <person name="Forrest D."/>
            <person name="Amos-Landgraf J."/>
            <person name="Schwartz D.C."/>
            <person name="Cheng Z."/>
            <person name="Lindblad-Toh K."/>
            <person name="Eichler E.E."/>
            <person name="Ponting C.P."/>
        </authorList>
    </citation>
    <scope>NUCLEOTIDE SEQUENCE [LARGE SCALE GENOMIC DNA]</scope>
    <source>
        <strain>C57BL/6J</strain>
    </source>
</reference>
<reference key="2">
    <citation type="journal article" date="2004" name="Genome Res.">
        <title>The status, quality, and expansion of the NIH full-length cDNA project: the Mammalian Gene Collection (MGC).</title>
        <authorList>
            <consortium name="The MGC Project Team"/>
        </authorList>
    </citation>
    <scope>NUCLEOTIDE SEQUENCE [LARGE SCALE MRNA]</scope>
    <source>
        <tissue>Brain</tissue>
    </source>
</reference>
<reference key="3">
    <citation type="journal article" date="2001" name="Cell">
        <title>Signal transduction in neuronal migration: roles of GTPase activating proteins and the small GTPase Cdc42 in the Slit-Robo pathway.</title>
        <authorList>
            <person name="Wong K."/>
            <person name="Ren X.R."/>
            <person name="Huang Y.Z."/>
            <person name="Xie Y."/>
            <person name="Liu G."/>
            <person name="Saito H."/>
            <person name="Tang H."/>
            <person name="Wen L."/>
            <person name="Brady-Kalnay S.M."/>
            <person name="Mei L."/>
            <person name="Wu J.Y."/>
            <person name="Xiong W.C."/>
            <person name="Rao Y."/>
        </authorList>
    </citation>
    <scope>NUCLEOTIDE SEQUENCE [MRNA] OF 432-836</scope>
</reference>
<reference key="4">
    <citation type="journal article" date="2005" name="Science">
        <title>The transcriptional landscape of the mammalian genome.</title>
        <authorList>
            <person name="Carninci P."/>
            <person name="Kasukawa T."/>
            <person name="Katayama S."/>
            <person name="Gough J."/>
            <person name="Frith M.C."/>
            <person name="Maeda N."/>
            <person name="Oyama R."/>
            <person name="Ravasi T."/>
            <person name="Lenhard B."/>
            <person name="Wells C."/>
            <person name="Kodzius R."/>
            <person name="Shimokawa K."/>
            <person name="Bajic V.B."/>
            <person name="Brenner S.E."/>
            <person name="Batalov S."/>
            <person name="Forrest A.R."/>
            <person name="Zavolan M."/>
            <person name="Davis M.J."/>
            <person name="Wilming L.G."/>
            <person name="Aidinis V."/>
            <person name="Allen J.E."/>
            <person name="Ambesi-Impiombato A."/>
            <person name="Apweiler R."/>
            <person name="Aturaliya R.N."/>
            <person name="Bailey T.L."/>
            <person name="Bansal M."/>
            <person name="Baxter L."/>
            <person name="Beisel K.W."/>
            <person name="Bersano T."/>
            <person name="Bono H."/>
            <person name="Chalk A.M."/>
            <person name="Chiu K.P."/>
            <person name="Choudhary V."/>
            <person name="Christoffels A."/>
            <person name="Clutterbuck D.R."/>
            <person name="Crowe M.L."/>
            <person name="Dalla E."/>
            <person name="Dalrymple B.P."/>
            <person name="de Bono B."/>
            <person name="Della Gatta G."/>
            <person name="di Bernardo D."/>
            <person name="Down T."/>
            <person name="Engstrom P."/>
            <person name="Fagiolini M."/>
            <person name="Faulkner G."/>
            <person name="Fletcher C.F."/>
            <person name="Fukushima T."/>
            <person name="Furuno M."/>
            <person name="Futaki S."/>
            <person name="Gariboldi M."/>
            <person name="Georgii-Hemming P."/>
            <person name="Gingeras T.R."/>
            <person name="Gojobori T."/>
            <person name="Green R.E."/>
            <person name="Gustincich S."/>
            <person name="Harbers M."/>
            <person name="Hayashi Y."/>
            <person name="Hensch T.K."/>
            <person name="Hirokawa N."/>
            <person name="Hill D."/>
            <person name="Huminiecki L."/>
            <person name="Iacono M."/>
            <person name="Ikeo K."/>
            <person name="Iwama A."/>
            <person name="Ishikawa T."/>
            <person name="Jakt M."/>
            <person name="Kanapin A."/>
            <person name="Katoh M."/>
            <person name="Kawasawa Y."/>
            <person name="Kelso J."/>
            <person name="Kitamura H."/>
            <person name="Kitano H."/>
            <person name="Kollias G."/>
            <person name="Krishnan S.P."/>
            <person name="Kruger A."/>
            <person name="Kummerfeld S.K."/>
            <person name="Kurochkin I.V."/>
            <person name="Lareau L.F."/>
            <person name="Lazarevic D."/>
            <person name="Lipovich L."/>
            <person name="Liu J."/>
            <person name="Liuni S."/>
            <person name="McWilliam S."/>
            <person name="Madan Babu M."/>
            <person name="Madera M."/>
            <person name="Marchionni L."/>
            <person name="Matsuda H."/>
            <person name="Matsuzawa S."/>
            <person name="Miki H."/>
            <person name="Mignone F."/>
            <person name="Miyake S."/>
            <person name="Morris K."/>
            <person name="Mottagui-Tabar S."/>
            <person name="Mulder N."/>
            <person name="Nakano N."/>
            <person name="Nakauchi H."/>
            <person name="Ng P."/>
            <person name="Nilsson R."/>
            <person name="Nishiguchi S."/>
            <person name="Nishikawa S."/>
            <person name="Nori F."/>
            <person name="Ohara O."/>
            <person name="Okazaki Y."/>
            <person name="Orlando V."/>
            <person name="Pang K.C."/>
            <person name="Pavan W.J."/>
            <person name="Pavesi G."/>
            <person name="Pesole G."/>
            <person name="Petrovsky N."/>
            <person name="Piazza S."/>
            <person name="Reed J."/>
            <person name="Reid J.F."/>
            <person name="Ring B.Z."/>
            <person name="Ringwald M."/>
            <person name="Rost B."/>
            <person name="Ruan Y."/>
            <person name="Salzberg S.L."/>
            <person name="Sandelin A."/>
            <person name="Schneider C."/>
            <person name="Schoenbach C."/>
            <person name="Sekiguchi K."/>
            <person name="Semple C.A."/>
            <person name="Seno S."/>
            <person name="Sessa L."/>
            <person name="Sheng Y."/>
            <person name="Shibata Y."/>
            <person name="Shimada H."/>
            <person name="Shimada K."/>
            <person name="Silva D."/>
            <person name="Sinclair B."/>
            <person name="Sperling S."/>
            <person name="Stupka E."/>
            <person name="Sugiura K."/>
            <person name="Sultana R."/>
            <person name="Takenaka Y."/>
            <person name="Taki K."/>
            <person name="Tammoja K."/>
            <person name="Tan S.L."/>
            <person name="Tang S."/>
            <person name="Taylor M.S."/>
            <person name="Tegner J."/>
            <person name="Teichmann S.A."/>
            <person name="Ueda H.R."/>
            <person name="van Nimwegen E."/>
            <person name="Verardo R."/>
            <person name="Wei C.L."/>
            <person name="Yagi K."/>
            <person name="Yamanishi H."/>
            <person name="Zabarovsky E."/>
            <person name="Zhu S."/>
            <person name="Zimmer A."/>
            <person name="Hide W."/>
            <person name="Bult C."/>
            <person name="Grimmond S.M."/>
            <person name="Teasdale R.D."/>
            <person name="Liu E.T."/>
            <person name="Brusic V."/>
            <person name="Quackenbush J."/>
            <person name="Wahlestedt C."/>
            <person name="Mattick J.S."/>
            <person name="Hume D.A."/>
            <person name="Kai C."/>
            <person name="Sasaki D."/>
            <person name="Tomaru Y."/>
            <person name="Fukuda S."/>
            <person name="Kanamori-Katayama M."/>
            <person name="Suzuki M."/>
            <person name="Aoki J."/>
            <person name="Arakawa T."/>
            <person name="Iida J."/>
            <person name="Imamura K."/>
            <person name="Itoh M."/>
            <person name="Kato T."/>
            <person name="Kawaji H."/>
            <person name="Kawagashira N."/>
            <person name="Kawashima T."/>
            <person name="Kojima M."/>
            <person name="Kondo S."/>
            <person name="Konno H."/>
            <person name="Nakano K."/>
            <person name="Ninomiya N."/>
            <person name="Nishio T."/>
            <person name="Okada M."/>
            <person name="Plessy C."/>
            <person name="Shibata K."/>
            <person name="Shiraki T."/>
            <person name="Suzuki S."/>
            <person name="Tagami M."/>
            <person name="Waki K."/>
            <person name="Watahiki A."/>
            <person name="Okamura-Oho Y."/>
            <person name="Suzuki H."/>
            <person name="Kawai J."/>
            <person name="Hayashizaki Y."/>
        </authorList>
    </citation>
    <scope>NUCLEOTIDE SEQUENCE [LARGE SCALE MRNA] OF 538-1071</scope>
    <source>
        <strain>C57BL/6J</strain>
        <tissue>Brain</tissue>
    </source>
</reference>
<reference key="5">
    <citation type="journal article" date="1996" name="EMBO J.">
        <title>Formin binding proteins bear WWP/WW domains that bind proline-rich peptides and functionally resemble SH3 domains.</title>
        <authorList>
            <person name="Chan D.C."/>
            <person name="Bedford M.T."/>
            <person name="Leder P."/>
        </authorList>
    </citation>
    <scope>NUCLEOTIDE SEQUENCE [MRNA] OF 732-782</scope>
    <source>
        <strain>FVB/NJ</strain>
    </source>
</reference>
<reference key="6">
    <citation type="journal article" date="2009" name="Cell">
        <title>The F-BAR domain of srGAP2 induces membrane protrusions required for neuronal migration and morphogenesis.</title>
        <authorList>
            <person name="Guerrier S."/>
            <person name="Coutinho-Budd J."/>
            <person name="Sassa T."/>
            <person name="Gresset A."/>
            <person name="Jordan N.V."/>
            <person name="Chen K."/>
            <person name="Jin W.L."/>
            <person name="Frost A."/>
            <person name="Polleux F."/>
        </authorList>
    </citation>
    <scope>FUNCTION IN NEURON MIGRATION AND MORPHOGENESIS</scope>
    <scope>SUBCELLULAR LOCATION</scope>
    <scope>DEVELOPMENTAL STAGE</scope>
    <scope>SUBUNIT</scope>
    <scope>INTERACTION WITH RAC1</scope>
    <scope>MUTAGENESIS OF ARG-527 AND TRP-765</scope>
</reference>
<reference key="7">
    <citation type="journal article" date="2010" name="Cell">
        <title>A tissue-specific atlas of mouse protein phosphorylation and expression.</title>
        <authorList>
            <person name="Huttlin E.L."/>
            <person name="Jedrychowski M.P."/>
            <person name="Elias J.E."/>
            <person name="Goswami T."/>
            <person name="Rad R."/>
            <person name="Beausoleil S.A."/>
            <person name="Villen J."/>
            <person name="Haas W."/>
            <person name="Sowa M.E."/>
            <person name="Gygi S.P."/>
        </authorList>
    </citation>
    <scope>PHOSPHORYLATION [LARGE SCALE ANALYSIS] AT SER-500; SER-695 AND SER-990</scope>
    <scope>IDENTIFICATION BY MASS SPECTROMETRY [LARGE SCALE ANALYSIS]</scope>
    <source>
        <tissue>Brain</tissue>
        <tissue>Brown adipose tissue</tissue>
        <tissue>Heart</tissue>
        <tissue>Kidney</tissue>
        <tissue>Lung</tissue>
        <tissue>Pancreas</tissue>
        <tissue>Spleen</tissue>
        <tissue>Testis</tissue>
    </source>
</reference>
<reference key="8">
    <citation type="journal article" date="2011" name="J. Biol. Chem.">
        <title>Bi-modal regulation of a formin by srGAP2.</title>
        <authorList>
            <person name="Mason F.M."/>
            <person name="Heimsath E.G."/>
            <person name="Higgs H.N."/>
            <person name="Soderling S.H."/>
        </authorList>
    </citation>
    <scope>INTERACTION WITH FMNL1; FMNL3 AND ROBO2</scope>
    <scope>SUBCELLULAR LOCATION</scope>
    <scope>TISSUE SPECIFICITY</scope>
</reference>
<reference key="9">
    <citation type="journal article" date="2011" name="Sci. Signal.">
        <title>SH3 domain-based phototrapping in living cells reveals Rho family GAP signaling complexes.</title>
        <authorList>
            <person name="Okada H."/>
            <person name="Uezu A."/>
            <person name="Mason F.M."/>
            <person name="Soderblom E.J."/>
            <person name="Moseley M.A. III"/>
            <person name="Soderling S.H."/>
        </authorList>
    </citation>
    <scope>INTERACTION WITH GPHN</scope>
</reference>
<reference key="10">
    <citation type="journal article" date="2012" name="Cell">
        <title>Inhibition of SRGAP2 function by its human-specific paralogs induces neoteny during spine maturation.</title>
        <authorList>
            <person name="Charrier C."/>
            <person name="Joshi K."/>
            <person name="Coutinho-Budd J."/>
            <person name="Kim J.E."/>
            <person name="Lambert N."/>
            <person name="de Marchena J."/>
            <person name="Jin W.L."/>
            <person name="Vanderhaeghen P."/>
            <person name="Ghosh A."/>
            <person name="Sassa T."/>
            <person name="Polleux F."/>
        </authorList>
    </citation>
    <scope>FUNCTION IN DENDRITIC SPINE MATURATION</scope>
    <scope>DISRUPTION PHENOTYPE</scope>
    <scope>SUBCELLULAR LOCATION</scope>
</reference>
<reference key="11">
    <citation type="journal article" date="2016" name="Neuron">
        <title>SRGAP2 and its human-specific paralog co-regulate the development of excitatory and inhibitory synapses.</title>
        <authorList>
            <person name="Fossati M."/>
            <person name="Pizzarelli R."/>
            <person name="Schmidt E.R."/>
            <person name="Kupferman J.V."/>
            <person name="Stroebel D."/>
            <person name="Polleux F."/>
            <person name="Charrier C."/>
        </authorList>
    </citation>
    <scope>FUNCTION</scope>
    <scope>SUBCELLULAR LOCATION</scope>
    <scope>INTERACTION WITH GPHN AND HOMER1</scope>
    <scope>MUTAGENESIS OF 340-PRO--PHE-343 AND TRP-765</scope>
</reference>
<reference key="12">
    <citation type="journal article" date="2015" name="Dev. Cell">
        <title>SrGAP2-dependent integration of membrane geometry and Slit-Robo-repulsive cues regulates fibroblast contact inhibition of locomotion.</title>
        <authorList>
            <person name="Fritz R.D."/>
            <person name="Menshykau D."/>
            <person name="Martin K."/>
            <person name="Reimann A."/>
            <person name="Pontelli V."/>
            <person name="Pertz O."/>
        </authorList>
    </citation>
    <scope>FUNCTION</scope>
</reference>
<feature type="chain" id="PRO_0000056768" description="SLIT-ROBO Rho GTPase-activating protein 2">
    <location>
        <begin position="1"/>
        <end position="1071"/>
    </location>
</feature>
<feature type="domain" description="F-BAR" evidence="6">
    <location>
        <begin position="22"/>
        <end position="325"/>
    </location>
</feature>
<feature type="domain" description="Rho-GAP" evidence="4">
    <location>
        <begin position="489"/>
        <end position="679"/>
    </location>
</feature>
<feature type="domain" description="SH3" evidence="5">
    <location>
        <begin position="728"/>
        <end position="787"/>
    </location>
</feature>
<feature type="region of interest" description="Disordered" evidence="7">
    <location>
        <begin position="181"/>
        <end position="211"/>
    </location>
</feature>
<feature type="region of interest" description="Disordered" evidence="7">
    <location>
        <begin position="700"/>
        <end position="726"/>
    </location>
</feature>
<feature type="region of interest" description="Disordered" evidence="7">
    <location>
        <begin position="795"/>
        <end position="819"/>
    </location>
</feature>
<feature type="region of interest" description="Disordered" evidence="7">
    <location>
        <begin position="838"/>
        <end position="918"/>
    </location>
</feature>
<feature type="region of interest" description="Disordered" evidence="7">
    <location>
        <begin position="984"/>
        <end position="1012"/>
    </location>
</feature>
<feature type="region of interest" description="Disordered" evidence="7">
    <location>
        <begin position="1029"/>
        <end position="1071"/>
    </location>
</feature>
<feature type="coiled-coil region" evidence="3">
    <location>
        <begin position="363"/>
        <end position="401"/>
    </location>
</feature>
<feature type="coiled-coil region" evidence="3">
    <location>
        <begin position="940"/>
        <end position="968"/>
    </location>
</feature>
<feature type="compositionally biased region" description="Basic and acidic residues" evidence="7">
    <location>
        <begin position="181"/>
        <end position="203"/>
    </location>
</feature>
<feature type="compositionally biased region" description="Polar residues" evidence="7">
    <location>
        <begin position="705"/>
        <end position="717"/>
    </location>
</feature>
<feature type="compositionally biased region" description="Low complexity" evidence="7">
    <location>
        <begin position="855"/>
        <end position="868"/>
    </location>
</feature>
<feature type="compositionally biased region" description="Polar residues" evidence="7">
    <location>
        <begin position="874"/>
        <end position="885"/>
    </location>
</feature>
<feature type="compositionally biased region" description="Polar residues" evidence="7">
    <location>
        <begin position="897"/>
        <end position="907"/>
    </location>
</feature>
<feature type="compositionally biased region" description="Polar residues" evidence="7">
    <location>
        <begin position="1047"/>
        <end position="1071"/>
    </location>
</feature>
<feature type="site" description="Arginine finger; crucial for GTP hydrolysis by stabilizing the transition state" evidence="4">
    <location>
        <position position="527"/>
    </location>
</feature>
<feature type="modified residue" description="Phosphoserine" evidence="1">
    <location>
        <position position="206"/>
    </location>
</feature>
<feature type="modified residue" description="Phosphoserine" evidence="1">
    <location>
        <position position="427"/>
    </location>
</feature>
<feature type="modified residue" description="Phosphoserine" evidence="18">
    <location>
        <position position="500"/>
    </location>
</feature>
<feature type="modified residue" description="Phosphoserine" evidence="1">
    <location>
        <position position="691"/>
    </location>
</feature>
<feature type="modified residue" description="Phosphoserine" evidence="18">
    <location>
        <position position="695"/>
    </location>
</feature>
<feature type="modified residue" description="Phosphoserine" evidence="2">
    <location>
        <position position="724"/>
    </location>
</feature>
<feature type="modified residue" description="Phosphoserine" evidence="2">
    <location>
        <position position="795"/>
    </location>
</feature>
<feature type="modified residue" description="Phosphoserine" evidence="2">
    <location>
        <position position="916"/>
    </location>
</feature>
<feature type="modified residue" description="Symmetric dimethylarginine; by PRMT5" evidence="2">
    <location>
        <position position="927"/>
    </location>
</feature>
<feature type="modified residue" description="Phosphoserine" evidence="2">
    <location>
        <position position="930"/>
    </location>
</feature>
<feature type="modified residue" description="Phosphoserine" evidence="18">
    <location>
        <position position="990"/>
    </location>
</feature>
<feature type="modified residue" description="Phosphoserine" evidence="2">
    <location>
        <position position="994"/>
    </location>
</feature>
<feature type="modified residue" description="Phosphoserine" evidence="2">
    <location>
        <position position="1013"/>
    </location>
</feature>
<feature type="modified residue" description="Phosphoserine" evidence="2">
    <location>
        <position position="1027"/>
    </location>
</feature>
<feature type="mutagenesis site" description="Abolished interaction with HOMER1." evidence="13">
    <original>PMKF</original>
    <variation>LMKC</variation>
    <location>
        <begin position="340"/>
        <end position="343"/>
    </location>
</feature>
<feature type="mutagenesis site" description="Abolished RAC1 GTPase activity. Abolished ability to induce neurite branching. No effect on filopodia biogenesis and neurite outgrowth." evidence="8 13">
    <original>R</original>
    <variation>L</variation>
    <location>
        <position position="527"/>
    </location>
</feature>
<feature type="mutagenesis site" description="Loss of the ability to induce filopodia and to initiate neurite outgrowth. Abolished interaction with GPHN." evidence="8 13">
    <original>W</original>
    <variation>A</variation>
    <location>
        <position position="765"/>
    </location>
</feature>
<feature type="sequence conflict" description="In Ref. 3; AAL27032." evidence="16" ref="3">
    <original>A</original>
    <variation>V</variation>
    <location>
        <position position="598"/>
    </location>
</feature>
<feature type="sequence conflict" description="In Ref. 3; AAL27032." evidence="16" ref="3">
    <original>T</original>
    <variation>S</variation>
    <location>
        <position position="612"/>
    </location>
</feature>
<feature type="sequence conflict" description="In Ref. 3; AAL27032." evidence="16" ref="3">
    <original>A</original>
    <variation>S</variation>
    <location>
        <position position="662"/>
    </location>
</feature>
<feature type="sequence conflict" description="In Ref. 3; AAL27032." evidence="16" ref="3">
    <original>F</original>
    <variation>C</variation>
    <location>
        <position position="737"/>
    </location>
</feature>
<feature type="sequence conflict" description="In Ref. 3; AAL27032." evidence="16" ref="3">
    <original>W</original>
    <variation>L</variation>
    <location>
        <position position="765"/>
    </location>
</feature>
<keyword id="KW-1003">Cell membrane</keyword>
<keyword id="KW-0966">Cell projection</keyword>
<keyword id="KW-0175">Coiled coil</keyword>
<keyword id="KW-0963">Cytoplasm</keyword>
<keyword id="KW-0968">Cytoplasmic vesicle</keyword>
<keyword id="KW-0343">GTPase activation</keyword>
<keyword id="KW-0472">Membrane</keyword>
<keyword id="KW-0488">Methylation</keyword>
<keyword id="KW-0524">Neurogenesis</keyword>
<keyword id="KW-0539">Nucleus</keyword>
<keyword id="KW-0597">Phosphoprotein</keyword>
<keyword id="KW-0628">Postsynaptic cell membrane</keyword>
<keyword id="KW-1185">Reference proteome</keyword>
<keyword id="KW-0728">SH3 domain</keyword>
<keyword id="KW-0770">Synapse</keyword>
<sequence>MTSPAKFKKDKEIIAEYDTQVKEIRAQLTEQMKCLDQQCELRVQLLQDLQDFFRKKAEIEMDYSRNLEKLAERFLAKTRSTKDQQFKKDQNVLSPVNCWNLLLNQVKRESRDHTTLSDIYLNNIIPRFVQVSEDSGRLFKKSKEVGQQLQDDLMKVLNELYSVMKTYHMYNADSISAQSKLKEAEKQEEKQIGKSVKQEDRQTPRSPDSTANVRIEEKHVRRSSVKKIEKMKEKRQAKYTENKLKAIKARNEYLLALEATNASVFKYYIHDLSDIIDQCCDLGYHASLNRALRTFLSAELNLEQSKHEGLDAIENAVENLDATSDKQRLMEMYNNVFCPPMKFEFQPHMGDMASQLCAQQPVQSELVQRCQQLQSRLSTLKIENEEVKKTMEATLQTIQDIVTVEDFDVSDCFQYSNSMESVKSTVSETFMSKPSIAKRRANQQETEQFYFTKMKEYLEGRNLITKLQAKHDLLQKTLGESQRTDCSLARRSSTVRKQDSSQAIPLVVESCIRFISRHGLQHEGIFRVSGSQVEVNDIKNAFERGEDPLAGDQNDHDMDSIAGVLKLYFRGLEHPLFPKDIFHDLIACVTMDNLQERAVHIRKVLLVLPKPTLIIMRYLFAFLNHLSQFSEENMMDPYNLAICFGPSLMSVPEGHDQVSCQAHVNELIKTIIIQHENIFPNPRELEGPIYSRGGSMEDYCDSTHGETTSAEDSTQDVTAEHHTSDDECEPIEAIAKFDYVGRTARELSFKKGASLLLYQRASDDWWEGRHNGIDGLIPHQYIVVQDTEDGVVERSSPKSEIEVMSEPPEEKVTARTGASCPSGGHVADIYLANINKQRKRPESGSIRKAFRSDSHGLGSSLTDSSSLGVGASCRPSSQPIMSQNLPKEGPDKCSISGHGSLNSISRHSSLKNRMDSPQIRKTATAGRSKSFNNHRPMDPEVIAQDIEATMNSALNELQELERQSSAKHTPDVVLDTLEPLKTSPVVAPTSEPSSPLHTQLLKDPEPAFQRSASTAGDIACAFRPVKSVKMAAPVKPPATRPKPTVFPKTNATSPGVNSSASPQATDKSCTV</sequence>
<gene>
    <name evidence="14 17" type="primary">Srgap2</name>
    <name evidence="15" type="synonym">Fbp27</name>
    <name type="synonym">Fnbp2</name>
</gene>